<reference key="1">
    <citation type="submission" date="2008-10" db="EMBL/GenBank/DDBJ databases">
        <title>Genome sequence of Bacillus cereus B4264.</title>
        <authorList>
            <person name="Dodson R.J."/>
            <person name="Durkin A.S."/>
            <person name="Rosovitz M.J."/>
            <person name="Rasko D.A."/>
            <person name="Hoffmaster A."/>
            <person name="Ravel J."/>
            <person name="Sutton G."/>
        </authorList>
    </citation>
    <scope>NUCLEOTIDE SEQUENCE [LARGE SCALE GENOMIC DNA]</scope>
    <source>
        <strain>B4264</strain>
    </source>
</reference>
<name>Y4063_BACC4</name>
<feature type="chain" id="PRO_1000188670" description="UPF0637 protein BCB4264_A4063">
    <location>
        <begin position="1"/>
        <end position="208"/>
    </location>
</feature>
<comment type="similarity">
    <text evidence="1">Belongs to the UPF0637 family.</text>
</comment>
<sequence>MTIQTFKSTDFDVFTVDGLEERMSAIKTNIHPKLEALGEQFAEYLSKQTDENFFYHVAKHARRKVNPPNDTWVAFSTNKRGYKMLPHFQIGLWGTHAFIYFGLIYECPQKVETAHAFLEHLNDLKTNIPNDFVWSIDHTKPSVKLHKTLETEDLQKMIERLATVKKAELLVGIHISPEEFSAMTNEQFLAKIESTMQSLLPLYALCNR</sequence>
<accession>B7H6U7</accession>
<evidence type="ECO:0000255" key="1">
    <source>
        <dbReference type="HAMAP-Rule" id="MF_01851"/>
    </source>
</evidence>
<protein>
    <recommendedName>
        <fullName evidence="1">UPF0637 protein BCB4264_A4063</fullName>
    </recommendedName>
</protein>
<dbReference type="EMBL" id="CP001176">
    <property type="protein sequence ID" value="ACK63092.1"/>
    <property type="molecule type" value="Genomic_DNA"/>
</dbReference>
<dbReference type="RefSeq" id="WP_000155317.1">
    <property type="nucleotide sequence ID" value="NZ_VEHB01000002.1"/>
</dbReference>
<dbReference type="SMR" id="B7H6U7"/>
<dbReference type="KEGG" id="bcb:BCB4264_A4063"/>
<dbReference type="HOGENOM" id="CLU_096059_0_0_9"/>
<dbReference type="Proteomes" id="UP000007096">
    <property type="component" value="Chromosome"/>
</dbReference>
<dbReference type="Gene3D" id="3.30.930.20">
    <property type="entry name" value="Protein of unknown function DUF1054"/>
    <property type="match status" value="1"/>
</dbReference>
<dbReference type="HAMAP" id="MF_01851">
    <property type="entry name" value="UPF0637"/>
    <property type="match status" value="1"/>
</dbReference>
<dbReference type="InterPro" id="IPR009403">
    <property type="entry name" value="UPF0637"/>
</dbReference>
<dbReference type="InterPro" id="IPR053707">
    <property type="entry name" value="UPF0637_domain_sf"/>
</dbReference>
<dbReference type="Pfam" id="PF06335">
    <property type="entry name" value="DUF1054"/>
    <property type="match status" value="1"/>
</dbReference>
<dbReference type="PIRSF" id="PIRSF021332">
    <property type="entry name" value="DUF1054"/>
    <property type="match status" value="1"/>
</dbReference>
<dbReference type="SUPFAM" id="SSF142913">
    <property type="entry name" value="YktB/PF0168-like"/>
    <property type="match status" value="1"/>
</dbReference>
<gene>
    <name type="ordered locus">BCB4264_A4063</name>
</gene>
<organism>
    <name type="scientific">Bacillus cereus (strain B4264)</name>
    <dbReference type="NCBI Taxonomy" id="405532"/>
    <lineage>
        <taxon>Bacteria</taxon>
        <taxon>Bacillati</taxon>
        <taxon>Bacillota</taxon>
        <taxon>Bacilli</taxon>
        <taxon>Bacillales</taxon>
        <taxon>Bacillaceae</taxon>
        <taxon>Bacillus</taxon>
        <taxon>Bacillus cereus group</taxon>
    </lineage>
</organism>
<proteinExistence type="inferred from homology"/>